<accession>P36166</accession>
<accession>D6VXF0</accession>
<sequence length="706" mass="79434">MYNSIYGSPFPKINPKVRYKTALERAGFDTKPRNPFSSQRNASTGSLQASVKSPPITRQRNVSAAPSVPVTMKSAYTASSKSAYSSVKGESDIYPPPVLENSERRSVTPPKNSNFTSSRPSDISRSISRPSERASQEDPFRFERDLDRQAEQYAASRHTCKSPANKEFQAADNFPFNFEQEDAGNTEREQDLSPIERSFMMLTQNDTASVVNSMNQTDNRGVLDQKLGKEQQKEESSIEYESEGQQEDENDIESLNFEPDPKLQMNLENEPLQDDFPEAKQEEKNTEPKIPEINVTRESNTPSLTMNALDSKIYPDDNFSGLESSKEQKSPGVSSSSTKVEDLSLDGLNEKRLSITSSENVETPYTATNLQVEQLIAQLDDVSLSRNAKLDMNGNCLNAVDRKASRFKKSSAYLSGYPSMDIPVTQQTSIVQNSNTNLSRQTILVDKGDVDEDAPSESTTNGGTPIFYKFKQSNVEYSNNEGMGSQETFRTKLPTIEALQLQHKRNITDLREEIDNSKSNDSHVLPNGGTTRYSSDADYKETEPIEFKYPPGEGPCRACGLEVTGKRMFSKKENELSGQWHRECFKCIECGIKFNKHVPCYILGDEPYCQKHYHEENHSICKVCSNFIEGECLENDKVERFHVDCLNCFLCKTAITNDYYIFNGEIPLCGNHDMEALLKEGIDNATSSNDKNNTLSKRRTRLINFN</sequence>
<protein>
    <recommendedName>
        <fullName>Paxillin-like protein 1</fullName>
    </recommendedName>
</protein>
<organism>
    <name type="scientific">Saccharomyces cerevisiae (strain ATCC 204508 / S288c)</name>
    <name type="common">Baker's yeast</name>
    <dbReference type="NCBI Taxonomy" id="559292"/>
    <lineage>
        <taxon>Eukaryota</taxon>
        <taxon>Fungi</taxon>
        <taxon>Dikarya</taxon>
        <taxon>Ascomycota</taxon>
        <taxon>Saccharomycotina</taxon>
        <taxon>Saccharomycetes</taxon>
        <taxon>Saccharomycetales</taxon>
        <taxon>Saccharomycetaceae</taxon>
        <taxon>Saccharomyces</taxon>
    </lineage>
</organism>
<gene>
    <name type="primary">PXL1</name>
    <name type="ordered locus">YKR090W</name>
</gene>
<comment type="miscellaneous">
    <text evidence="3">Present with 1310 molecules/cell in log phase SD medium.</text>
</comment>
<name>PXL1_YEAST</name>
<proteinExistence type="evidence at protein level"/>
<evidence type="ECO:0000255" key="1">
    <source>
        <dbReference type="PROSITE-ProRule" id="PRU00125"/>
    </source>
</evidence>
<evidence type="ECO:0000256" key="2">
    <source>
        <dbReference type="SAM" id="MobiDB-lite"/>
    </source>
</evidence>
<evidence type="ECO:0000269" key="3">
    <source>
    </source>
</evidence>
<evidence type="ECO:0000305" key="4"/>
<evidence type="ECO:0007744" key="5">
    <source>
    </source>
</evidence>
<evidence type="ECO:0007744" key="6">
    <source>
    </source>
</evidence>
<keyword id="KW-0440">LIM domain</keyword>
<keyword id="KW-0479">Metal-binding</keyword>
<keyword id="KW-0597">Phosphoprotein</keyword>
<keyword id="KW-1185">Reference proteome</keyword>
<keyword id="KW-0677">Repeat</keyword>
<keyword id="KW-0862">Zinc</keyword>
<feature type="chain" id="PRO_0000075893" description="Paxillin-like protein 1">
    <location>
        <begin position="1"/>
        <end position="706"/>
    </location>
</feature>
<feature type="domain" description="LIM zinc-binding 1" evidence="1">
    <location>
        <begin position="556"/>
        <end position="612"/>
    </location>
</feature>
<feature type="domain" description="LIM zinc-binding 2" evidence="1">
    <location>
        <begin position="621"/>
        <end position="672"/>
    </location>
</feature>
<feature type="region of interest" description="Disordered" evidence="2">
    <location>
        <begin position="24"/>
        <end position="192"/>
    </location>
</feature>
<feature type="region of interest" description="Disordered" evidence="2">
    <location>
        <begin position="222"/>
        <end position="258"/>
    </location>
</feature>
<feature type="region of interest" description="Disordered" evidence="2">
    <location>
        <begin position="279"/>
        <end position="341"/>
    </location>
</feature>
<feature type="region of interest" description="Disordered" evidence="2">
    <location>
        <begin position="514"/>
        <end position="537"/>
    </location>
</feature>
<feature type="compositionally biased region" description="Polar residues" evidence="2">
    <location>
        <begin position="35"/>
        <end position="64"/>
    </location>
</feature>
<feature type="compositionally biased region" description="Low complexity" evidence="2">
    <location>
        <begin position="73"/>
        <end position="86"/>
    </location>
</feature>
<feature type="compositionally biased region" description="Low complexity" evidence="2">
    <location>
        <begin position="117"/>
        <end position="129"/>
    </location>
</feature>
<feature type="compositionally biased region" description="Basic and acidic residues" evidence="2">
    <location>
        <begin position="130"/>
        <end position="150"/>
    </location>
</feature>
<feature type="compositionally biased region" description="Basic and acidic residues" evidence="2">
    <location>
        <begin position="222"/>
        <end position="236"/>
    </location>
</feature>
<feature type="compositionally biased region" description="Acidic residues" evidence="2">
    <location>
        <begin position="237"/>
        <end position="252"/>
    </location>
</feature>
<feature type="compositionally biased region" description="Basic and acidic residues" evidence="2">
    <location>
        <begin position="279"/>
        <end position="290"/>
    </location>
</feature>
<feature type="compositionally biased region" description="Polar residues" evidence="2">
    <location>
        <begin position="296"/>
        <end position="308"/>
    </location>
</feature>
<feature type="modified residue" description="Phosphoserine" evidence="6">
    <location>
        <position position="43"/>
    </location>
</feature>
<feature type="modified residue" description="Phosphoserine" evidence="5 6">
    <location>
        <position position="63"/>
    </location>
</feature>
<feature type="sequence conflict" description="In Ref. 1; CAA82169." evidence="4" ref="1">
    <original>S</original>
    <variation>T</variation>
    <location>
        <position position="688"/>
    </location>
</feature>
<reference key="1">
    <citation type="journal article" date="1994" name="Nature">
        <title>Complete DNA sequence of yeast chromosome XI.</title>
        <authorList>
            <person name="Dujon B."/>
            <person name="Alexandraki D."/>
            <person name="Andre B."/>
            <person name="Ansorge W."/>
            <person name="Baladron V."/>
            <person name="Ballesta J.P.G."/>
            <person name="Banrevi A."/>
            <person name="Bolle P.-A."/>
            <person name="Bolotin-Fukuhara M."/>
            <person name="Bossier P."/>
            <person name="Bou G."/>
            <person name="Boyer J."/>
            <person name="Buitrago M.J."/>
            <person name="Cheret G."/>
            <person name="Colleaux L."/>
            <person name="Daignan-Fornier B."/>
            <person name="del Rey F."/>
            <person name="Dion C."/>
            <person name="Domdey H."/>
            <person name="Duesterhoeft A."/>
            <person name="Duesterhus S."/>
            <person name="Entian K.-D."/>
            <person name="Erfle H."/>
            <person name="Esteban P.F."/>
            <person name="Feldmann H."/>
            <person name="Fernandes L."/>
            <person name="Fobo G.M."/>
            <person name="Fritz C."/>
            <person name="Fukuhara H."/>
            <person name="Gabel C."/>
            <person name="Gaillon L."/>
            <person name="Garcia-Cantalejo J.M."/>
            <person name="Garcia-Ramirez J.J."/>
            <person name="Gent M.E."/>
            <person name="Ghazvini M."/>
            <person name="Goffeau A."/>
            <person name="Gonzalez A."/>
            <person name="Grothues D."/>
            <person name="Guerreiro P."/>
            <person name="Hegemann J.H."/>
            <person name="Hewitt N."/>
            <person name="Hilger F."/>
            <person name="Hollenberg C.P."/>
            <person name="Horaitis O."/>
            <person name="Indge K.J."/>
            <person name="Jacquier A."/>
            <person name="James C.M."/>
            <person name="Jauniaux J.-C."/>
            <person name="Jimenez A."/>
            <person name="Keuchel H."/>
            <person name="Kirchrath L."/>
            <person name="Kleine K."/>
            <person name="Koetter P."/>
            <person name="Legrain P."/>
            <person name="Liebl S."/>
            <person name="Louis E.J."/>
            <person name="Maia e Silva A."/>
            <person name="Marck C."/>
            <person name="Monnier A.-L."/>
            <person name="Moestl D."/>
            <person name="Mueller S."/>
            <person name="Obermaier B."/>
            <person name="Oliver S.G."/>
            <person name="Pallier C."/>
            <person name="Pascolo S."/>
            <person name="Pfeiffer F."/>
            <person name="Philippsen P."/>
            <person name="Planta R.J."/>
            <person name="Pohl F.M."/>
            <person name="Pohl T.M."/>
            <person name="Poehlmann R."/>
            <person name="Portetelle D."/>
            <person name="Purnelle B."/>
            <person name="Puzos V."/>
            <person name="Ramezani Rad M."/>
            <person name="Rasmussen S.W."/>
            <person name="Remacha M.A."/>
            <person name="Revuelta J.L."/>
            <person name="Richard G.-F."/>
            <person name="Rieger M."/>
            <person name="Rodrigues-Pousada C."/>
            <person name="Rose M."/>
            <person name="Rupp T."/>
            <person name="Santos M.A."/>
            <person name="Schwager C."/>
            <person name="Sensen C."/>
            <person name="Skala J."/>
            <person name="Soares H."/>
            <person name="Sor F."/>
            <person name="Stegemann J."/>
            <person name="Tettelin H."/>
            <person name="Thierry A."/>
            <person name="Tzermia M."/>
            <person name="Urrestarazu L.A."/>
            <person name="van Dyck L."/>
            <person name="van Vliet-Reedijk J.C."/>
            <person name="Valens M."/>
            <person name="Vandenbol M."/>
            <person name="Vilela C."/>
            <person name="Vissers S."/>
            <person name="von Wettstein D."/>
            <person name="Voss H."/>
            <person name="Wiemann S."/>
            <person name="Xu G."/>
            <person name="Zimmermann J."/>
            <person name="Haasemann M."/>
            <person name="Becker I."/>
            <person name="Mewes H.-W."/>
        </authorList>
    </citation>
    <scope>NUCLEOTIDE SEQUENCE [LARGE SCALE GENOMIC DNA]</scope>
    <source>
        <strain>ATCC 204508 / S288c</strain>
    </source>
</reference>
<reference key="2">
    <citation type="journal article" date="2014" name="G3 (Bethesda)">
        <title>The reference genome sequence of Saccharomyces cerevisiae: Then and now.</title>
        <authorList>
            <person name="Engel S.R."/>
            <person name="Dietrich F.S."/>
            <person name="Fisk D.G."/>
            <person name="Binkley G."/>
            <person name="Balakrishnan R."/>
            <person name="Costanzo M.C."/>
            <person name="Dwight S.S."/>
            <person name="Hitz B.C."/>
            <person name="Karra K."/>
            <person name="Nash R.S."/>
            <person name="Weng S."/>
            <person name="Wong E.D."/>
            <person name="Lloyd P."/>
            <person name="Skrzypek M.S."/>
            <person name="Miyasato S.R."/>
            <person name="Simison M."/>
            <person name="Cherry J.M."/>
        </authorList>
    </citation>
    <scope>GENOME REANNOTATION</scope>
    <scope>SEQUENCE REVISION TO 688</scope>
    <source>
        <strain>ATCC 204508 / S288c</strain>
    </source>
</reference>
<reference key="3">
    <citation type="journal article" date="2003" name="Nature">
        <title>Global analysis of protein expression in yeast.</title>
        <authorList>
            <person name="Ghaemmaghami S."/>
            <person name="Huh W.-K."/>
            <person name="Bower K."/>
            <person name="Howson R.W."/>
            <person name="Belle A."/>
            <person name="Dephoure N."/>
            <person name="O'Shea E.K."/>
            <person name="Weissman J.S."/>
        </authorList>
    </citation>
    <scope>LEVEL OF PROTEIN EXPRESSION [LARGE SCALE ANALYSIS]</scope>
</reference>
<reference key="4">
    <citation type="journal article" date="2008" name="Mol. Cell. Proteomics">
        <title>A multidimensional chromatography technology for in-depth phosphoproteome analysis.</title>
        <authorList>
            <person name="Albuquerque C.P."/>
            <person name="Smolka M.B."/>
            <person name="Payne S.H."/>
            <person name="Bafna V."/>
            <person name="Eng J."/>
            <person name="Zhou H."/>
        </authorList>
    </citation>
    <scope>PHOSPHORYLATION [LARGE SCALE ANALYSIS] AT SER-63</scope>
    <scope>IDENTIFICATION BY MASS SPECTROMETRY [LARGE SCALE ANALYSIS]</scope>
</reference>
<reference key="5">
    <citation type="journal article" date="2009" name="Science">
        <title>Global analysis of Cdk1 substrate phosphorylation sites provides insights into evolution.</title>
        <authorList>
            <person name="Holt L.J."/>
            <person name="Tuch B.B."/>
            <person name="Villen J."/>
            <person name="Johnson A.D."/>
            <person name="Gygi S.P."/>
            <person name="Morgan D.O."/>
        </authorList>
    </citation>
    <scope>PHOSPHORYLATION [LARGE SCALE ANALYSIS] AT SER-43 AND SER-63</scope>
    <scope>IDENTIFICATION BY MASS SPECTROMETRY [LARGE SCALE ANALYSIS]</scope>
</reference>
<dbReference type="EMBL" id="Z28315">
    <property type="protein sequence ID" value="CAA82169.1"/>
    <property type="molecule type" value="Genomic_DNA"/>
</dbReference>
<dbReference type="EMBL" id="BK006944">
    <property type="protein sequence ID" value="DAA09240.2"/>
    <property type="molecule type" value="Genomic_DNA"/>
</dbReference>
<dbReference type="PIR" id="S38168">
    <property type="entry name" value="S38168"/>
</dbReference>
<dbReference type="RefSeq" id="NP_013016.4">
    <property type="nucleotide sequence ID" value="NM_001179880.4"/>
</dbReference>
<dbReference type="BioGRID" id="34221">
    <property type="interactions" value="42"/>
</dbReference>
<dbReference type="DIP" id="DIP-763N"/>
<dbReference type="FunCoup" id="P36166">
    <property type="interactions" value="52"/>
</dbReference>
<dbReference type="IntAct" id="P36166">
    <property type="interactions" value="25"/>
</dbReference>
<dbReference type="MINT" id="P36166"/>
<dbReference type="STRING" id="4932.YKR090W"/>
<dbReference type="GlyGen" id="P36166">
    <property type="glycosylation" value="3 sites, 1 O-linked glycan (2 sites)"/>
</dbReference>
<dbReference type="iPTMnet" id="P36166"/>
<dbReference type="PaxDb" id="4932-YKR090W"/>
<dbReference type="PeptideAtlas" id="P36166"/>
<dbReference type="EnsemblFungi" id="YKR090W_mRNA">
    <property type="protein sequence ID" value="YKR090W"/>
    <property type="gene ID" value="YKR090W"/>
</dbReference>
<dbReference type="GeneID" id="853965"/>
<dbReference type="KEGG" id="sce:YKR090W"/>
<dbReference type="AGR" id="SGD:S000001798"/>
<dbReference type="SGD" id="S000001798">
    <property type="gene designation" value="PXL1"/>
</dbReference>
<dbReference type="VEuPathDB" id="FungiDB:YKR090W"/>
<dbReference type="eggNOG" id="KOG1703">
    <property type="taxonomic scope" value="Eukaryota"/>
</dbReference>
<dbReference type="HOGENOM" id="CLU_016772_0_0_1"/>
<dbReference type="InParanoid" id="P36166"/>
<dbReference type="OMA" id="IYGSPFP"/>
<dbReference type="OrthoDB" id="1112565at2759"/>
<dbReference type="BioCyc" id="YEAST:G3O-32053-MONOMER"/>
<dbReference type="BioGRID-ORCS" id="853965">
    <property type="hits" value="0 hits in 10 CRISPR screens"/>
</dbReference>
<dbReference type="PRO" id="PR:P36166"/>
<dbReference type="Proteomes" id="UP000002311">
    <property type="component" value="Chromosome XI"/>
</dbReference>
<dbReference type="RNAct" id="P36166">
    <property type="molecule type" value="protein"/>
</dbReference>
<dbReference type="GO" id="GO:0005933">
    <property type="term" value="C:cellular bud"/>
    <property type="evidence" value="ECO:0007005"/>
    <property type="project" value="SGD"/>
</dbReference>
<dbReference type="GO" id="GO:0005935">
    <property type="term" value="C:cellular bud neck"/>
    <property type="evidence" value="ECO:0000314"/>
    <property type="project" value="SGD"/>
</dbReference>
<dbReference type="GO" id="GO:0005934">
    <property type="term" value="C:cellular bud tip"/>
    <property type="evidence" value="ECO:0000314"/>
    <property type="project" value="SGD"/>
</dbReference>
<dbReference type="GO" id="GO:0005737">
    <property type="term" value="C:cytoplasm"/>
    <property type="evidence" value="ECO:0000314"/>
    <property type="project" value="SGD"/>
</dbReference>
<dbReference type="GO" id="GO:0000131">
    <property type="term" value="C:incipient cellular bud site"/>
    <property type="evidence" value="ECO:0000314"/>
    <property type="project" value="SGD"/>
</dbReference>
<dbReference type="GO" id="GO:0043332">
    <property type="term" value="C:mating projection tip"/>
    <property type="evidence" value="ECO:0000314"/>
    <property type="project" value="SGD"/>
</dbReference>
<dbReference type="GO" id="GO:0030427">
    <property type="term" value="C:site of polarized growth"/>
    <property type="evidence" value="ECO:0000314"/>
    <property type="project" value="SGD"/>
</dbReference>
<dbReference type="GO" id="GO:0046872">
    <property type="term" value="F:metal ion binding"/>
    <property type="evidence" value="ECO:0007669"/>
    <property type="project" value="UniProtKB-KW"/>
</dbReference>
<dbReference type="GO" id="GO:0005094">
    <property type="term" value="F:Rho GDP-dissociation inhibitor activity"/>
    <property type="evidence" value="ECO:0000316"/>
    <property type="project" value="SGD"/>
</dbReference>
<dbReference type="GO" id="GO:0030011">
    <property type="term" value="P:maintenance of cell polarity"/>
    <property type="evidence" value="ECO:0000315"/>
    <property type="project" value="SGD"/>
</dbReference>
<dbReference type="GO" id="GO:0035023">
    <property type="term" value="P:regulation of Rho protein signal transduction"/>
    <property type="evidence" value="ECO:0000316"/>
    <property type="project" value="SGD"/>
</dbReference>
<dbReference type="CDD" id="cd08368">
    <property type="entry name" value="LIM"/>
    <property type="match status" value="1"/>
</dbReference>
<dbReference type="CDD" id="cd09397">
    <property type="entry name" value="LIM1_UF1"/>
    <property type="match status" value="1"/>
</dbReference>
<dbReference type="FunFam" id="2.10.110.10:FF:000128">
    <property type="entry name" value="Pxl1p"/>
    <property type="match status" value="1"/>
</dbReference>
<dbReference type="FunFam" id="2.10.110.10:FF:000132">
    <property type="entry name" value="Pxl1p"/>
    <property type="match status" value="1"/>
</dbReference>
<dbReference type="Gene3D" id="2.10.110.10">
    <property type="entry name" value="Cysteine Rich Protein"/>
    <property type="match status" value="2"/>
</dbReference>
<dbReference type="InterPro" id="IPR001781">
    <property type="entry name" value="Znf_LIM"/>
</dbReference>
<dbReference type="PANTHER" id="PTHR24216:SF65">
    <property type="entry name" value="PAXILLIN-LIKE PROTEIN 1"/>
    <property type="match status" value="1"/>
</dbReference>
<dbReference type="PANTHER" id="PTHR24216">
    <property type="entry name" value="PAXILLIN-RELATED"/>
    <property type="match status" value="1"/>
</dbReference>
<dbReference type="Pfam" id="PF00412">
    <property type="entry name" value="LIM"/>
    <property type="match status" value="2"/>
</dbReference>
<dbReference type="SMART" id="SM00132">
    <property type="entry name" value="LIM"/>
    <property type="match status" value="2"/>
</dbReference>
<dbReference type="SUPFAM" id="SSF57716">
    <property type="entry name" value="Glucocorticoid receptor-like (DNA-binding domain)"/>
    <property type="match status" value="1"/>
</dbReference>
<dbReference type="PROSITE" id="PS00478">
    <property type="entry name" value="LIM_DOMAIN_1"/>
    <property type="match status" value="2"/>
</dbReference>
<dbReference type="PROSITE" id="PS50023">
    <property type="entry name" value="LIM_DOMAIN_2"/>
    <property type="match status" value="2"/>
</dbReference>